<comment type="similarity">
    <text evidence="1">Belongs to the universal ribosomal protein uS9 family.</text>
</comment>
<dbReference type="EMBL" id="AE003849">
    <property type="protein sequence ID" value="AAF84345.1"/>
    <property type="molecule type" value="Genomic_DNA"/>
</dbReference>
<dbReference type="PIR" id="E82669">
    <property type="entry name" value="E82669"/>
</dbReference>
<dbReference type="RefSeq" id="WP_010894036.1">
    <property type="nucleotide sequence ID" value="NC_002488.3"/>
</dbReference>
<dbReference type="SMR" id="Q9PD43"/>
<dbReference type="STRING" id="160492.XF_1536"/>
<dbReference type="KEGG" id="xfa:XF_1536"/>
<dbReference type="eggNOG" id="COG0103">
    <property type="taxonomic scope" value="Bacteria"/>
</dbReference>
<dbReference type="HOGENOM" id="CLU_046483_2_1_6"/>
<dbReference type="Proteomes" id="UP000000812">
    <property type="component" value="Chromosome"/>
</dbReference>
<dbReference type="GO" id="GO:0022627">
    <property type="term" value="C:cytosolic small ribosomal subunit"/>
    <property type="evidence" value="ECO:0007669"/>
    <property type="project" value="TreeGrafter"/>
</dbReference>
<dbReference type="GO" id="GO:0003723">
    <property type="term" value="F:RNA binding"/>
    <property type="evidence" value="ECO:0007669"/>
    <property type="project" value="TreeGrafter"/>
</dbReference>
<dbReference type="GO" id="GO:0003735">
    <property type="term" value="F:structural constituent of ribosome"/>
    <property type="evidence" value="ECO:0007669"/>
    <property type="project" value="InterPro"/>
</dbReference>
<dbReference type="GO" id="GO:0006412">
    <property type="term" value="P:translation"/>
    <property type="evidence" value="ECO:0007669"/>
    <property type="project" value="UniProtKB-UniRule"/>
</dbReference>
<dbReference type="FunFam" id="3.30.230.10:FF:000001">
    <property type="entry name" value="30S ribosomal protein S9"/>
    <property type="match status" value="1"/>
</dbReference>
<dbReference type="Gene3D" id="3.30.230.10">
    <property type="match status" value="1"/>
</dbReference>
<dbReference type="HAMAP" id="MF_00532_B">
    <property type="entry name" value="Ribosomal_uS9_B"/>
    <property type="match status" value="1"/>
</dbReference>
<dbReference type="InterPro" id="IPR020568">
    <property type="entry name" value="Ribosomal_Su5_D2-typ_SF"/>
</dbReference>
<dbReference type="InterPro" id="IPR000754">
    <property type="entry name" value="Ribosomal_uS9"/>
</dbReference>
<dbReference type="InterPro" id="IPR023035">
    <property type="entry name" value="Ribosomal_uS9_bac/plastid"/>
</dbReference>
<dbReference type="InterPro" id="IPR020574">
    <property type="entry name" value="Ribosomal_uS9_CS"/>
</dbReference>
<dbReference type="InterPro" id="IPR014721">
    <property type="entry name" value="Ribsml_uS5_D2-typ_fold_subgr"/>
</dbReference>
<dbReference type="NCBIfam" id="NF001099">
    <property type="entry name" value="PRK00132.1"/>
    <property type="match status" value="1"/>
</dbReference>
<dbReference type="PANTHER" id="PTHR21569">
    <property type="entry name" value="RIBOSOMAL PROTEIN S9"/>
    <property type="match status" value="1"/>
</dbReference>
<dbReference type="PANTHER" id="PTHR21569:SF1">
    <property type="entry name" value="SMALL RIBOSOMAL SUBUNIT PROTEIN US9M"/>
    <property type="match status" value="1"/>
</dbReference>
<dbReference type="Pfam" id="PF00380">
    <property type="entry name" value="Ribosomal_S9"/>
    <property type="match status" value="1"/>
</dbReference>
<dbReference type="SUPFAM" id="SSF54211">
    <property type="entry name" value="Ribosomal protein S5 domain 2-like"/>
    <property type="match status" value="1"/>
</dbReference>
<dbReference type="PROSITE" id="PS00360">
    <property type="entry name" value="RIBOSOMAL_S9"/>
    <property type="match status" value="1"/>
</dbReference>
<feature type="chain" id="PRO_0000111445" description="Small ribosomal subunit protein uS9">
    <location>
        <begin position="1"/>
        <end position="130"/>
    </location>
</feature>
<proteinExistence type="inferred from homology"/>
<gene>
    <name evidence="1" type="primary">rpsI</name>
    <name type="ordered locus">XF_1536</name>
</gene>
<name>RS9_XYLFA</name>
<keyword id="KW-0687">Ribonucleoprotein</keyword>
<keyword id="KW-0689">Ribosomal protein</keyword>
<accession>Q9PD43</accession>
<protein>
    <recommendedName>
        <fullName evidence="1">Small ribosomal subunit protein uS9</fullName>
    </recommendedName>
    <alternativeName>
        <fullName evidence="2">30S ribosomal protein S9</fullName>
    </alternativeName>
</protein>
<sequence>MPITQNYGTGRRKSSKARIFLRKGSGNITVNGRPLDEFFGRETARMIVRQPLELTKNVANFDILITATGGGTTGQAGAIRLGIARALVEYDASLKPELRKAGFMTRDAREVERKKVGLHKARRATQFSKR</sequence>
<organism>
    <name type="scientific">Xylella fastidiosa (strain 9a5c)</name>
    <dbReference type="NCBI Taxonomy" id="160492"/>
    <lineage>
        <taxon>Bacteria</taxon>
        <taxon>Pseudomonadati</taxon>
        <taxon>Pseudomonadota</taxon>
        <taxon>Gammaproteobacteria</taxon>
        <taxon>Lysobacterales</taxon>
        <taxon>Lysobacteraceae</taxon>
        <taxon>Xylella</taxon>
    </lineage>
</organism>
<evidence type="ECO:0000255" key="1">
    <source>
        <dbReference type="HAMAP-Rule" id="MF_00532"/>
    </source>
</evidence>
<evidence type="ECO:0000305" key="2"/>
<reference key="1">
    <citation type="journal article" date="2000" name="Nature">
        <title>The genome sequence of the plant pathogen Xylella fastidiosa.</title>
        <authorList>
            <person name="Simpson A.J.G."/>
            <person name="Reinach F.C."/>
            <person name="Arruda P."/>
            <person name="Abreu F.A."/>
            <person name="Acencio M."/>
            <person name="Alvarenga R."/>
            <person name="Alves L.M.C."/>
            <person name="Araya J.E."/>
            <person name="Baia G.S."/>
            <person name="Baptista C.S."/>
            <person name="Barros M.H."/>
            <person name="Bonaccorsi E.D."/>
            <person name="Bordin S."/>
            <person name="Bove J.M."/>
            <person name="Briones M.R.S."/>
            <person name="Bueno M.R.P."/>
            <person name="Camargo A.A."/>
            <person name="Camargo L.E.A."/>
            <person name="Carraro D.M."/>
            <person name="Carrer H."/>
            <person name="Colauto N.B."/>
            <person name="Colombo C."/>
            <person name="Costa F.F."/>
            <person name="Costa M.C.R."/>
            <person name="Costa-Neto C.M."/>
            <person name="Coutinho L.L."/>
            <person name="Cristofani M."/>
            <person name="Dias-Neto E."/>
            <person name="Docena C."/>
            <person name="El-Dorry H."/>
            <person name="Facincani A.P."/>
            <person name="Ferreira A.J.S."/>
            <person name="Ferreira V.C.A."/>
            <person name="Ferro J.A."/>
            <person name="Fraga J.S."/>
            <person name="Franca S.C."/>
            <person name="Franco M.C."/>
            <person name="Frohme M."/>
            <person name="Furlan L.R."/>
            <person name="Garnier M."/>
            <person name="Goldman G.H."/>
            <person name="Goldman M.H.S."/>
            <person name="Gomes S.L."/>
            <person name="Gruber A."/>
            <person name="Ho P.L."/>
            <person name="Hoheisel J.D."/>
            <person name="Junqueira M.L."/>
            <person name="Kemper E.L."/>
            <person name="Kitajima J.P."/>
            <person name="Krieger J.E."/>
            <person name="Kuramae E.E."/>
            <person name="Laigret F."/>
            <person name="Lambais M.R."/>
            <person name="Leite L.C.C."/>
            <person name="Lemos E.G.M."/>
            <person name="Lemos M.V.F."/>
            <person name="Lopes S.A."/>
            <person name="Lopes C.R."/>
            <person name="Machado J.A."/>
            <person name="Machado M.A."/>
            <person name="Madeira A.M.B.N."/>
            <person name="Madeira H.M.F."/>
            <person name="Marino C.L."/>
            <person name="Marques M.V."/>
            <person name="Martins E.A.L."/>
            <person name="Martins E.M.F."/>
            <person name="Matsukuma A.Y."/>
            <person name="Menck C.F.M."/>
            <person name="Miracca E.C."/>
            <person name="Miyaki C.Y."/>
            <person name="Monteiro-Vitorello C.B."/>
            <person name="Moon D.H."/>
            <person name="Nagai M.A."/>
            <person name="Nascimento A.L.T.O."/>
            <person name="Netto L.E.S."/>
            <person name="Nhani A. Jr."/>
            <person name="Nobrega F.G."/>
            <person name="Nunes L.R."/>
            <person name="Oliveira M.A."/>
            <person name="de Oliveira M.C."/>
            <person name="de Oliveira R.C."/>
            <person name="Palmieri D.A."/>
            <person name="Paris A."/>
            <person name="Peixoto B.R."/>
            <person name="Pereira G.A.G."/>
            <person name="Pereira H.A. Jr."/>
            <person name="Pesquero J.B."/>
            <person name="Quaggio R.B."/>
            <person name="Roberto P.G."/>
            <person name="Rodrigues V."/>
            <person name="de Rosa A.J.M."/>
            <person name="de Rosa V.E. Jr."/>
            <person name="de Sa R.G."/>
            <person name="Santelli R.V."/>
            <person name="Sawasaki H.E."/>
            <person name="da Silva A.C.R."/>
            <person name="da Silva A.M."/>
            <person name="da Silva F.R."/>
            <person name="Silva W.A. Jr."/>
            <person name="da Silveira J.F."/>
            <person name="Silvestri M.L.Z."/>
            <person name="Siqueira W.J."/>
            <person name="de Souza A.A."/>
            <person name="de Souza A.P."/>
            <person name="Terenzi M.F."/>
            <person name="Truffi D."/>
            <person name="Tsai S.M."/>
            <person name="Tsuhako M.H."/>
            <person name="Vallada H."/>
            <person name="Van Sluys M.A."/>
            <person name="Verjovski-Almeida S."/>
            <person name="Vettore A.L."/>
            <person name="Zago M.A."/>
            <person name="Zatz M."/>
            <person name="Meidanis J."/>
            <person name="Setubal J.C."/>
        </authorList>
    </citation>
    <scope>NUCLEOTIDE SEQUENCE [LARGE SCALE GENOMIC DNA]</scope>
    <source>
        <strain>9a5c</strain>
    </source>
</reference>